<protein>
    <recommendedName>
        <fullName>Sensitive to high expression protein 9 homolog, mitochondrial</fullName>
    </recommendedName>
</protein>
<comment type="function">
    <text evidence="1">Required for the maintenance of the structure of the mitochondrial inner membrane. Involved in mitochondrial morphology. Causes growth arrest when highly overexpressed (By similarity).</text>
</comment>
<comment type="subunit">
    <text evidence="1">Homooligomer.</text>
</comment>
<comment type="subcellular location">
    <subcellularLocation>
        <location evidence="1">Mitochondrion inner membrane</location>
        <topology evidence="1">Multi-pass membrane protein</topology>
    </subcellularLocation>
</comment>
<comment type="similarity">
    <text evidence="4">Belongs to the SHE9 family.</text>
</comment>
<proteinExistence type="inferred from homology"/>
<name>SHE9_PICGU</name>
<sequence>MNSTNMSLKFRSRSAISVALVDQLMFATTIAIARGIRLCAGRSQYLAATCTPSRFVNKFQVRSSSNSKNIDDKLQTIIDSSNLGAVKKQNEANNKSRNASDTVNDTNTAIPSSSETFHQANADEHTISESTKRAILAENPTLPSQRERLRTETSKRIETYLESLQKTIFRATRTLNDATGYSSIEGLKNEVEKLEIELRRAKTTVKECKKAYTDAISVRSQSQQEVNELLTRKHNWSPSDLERFTELYRNDHTNEQLEAEAARKLTDAESKVDSIQLKLTQSILTRYHEEQIWSDKIRSASTWGTWVIMGINVLLFFVATLIVEPWKRKRLVASFEDKVKVAISEVNLSNTDSVVEKNTIPAPEASALNETSFSSQISLEPSLLSLSWSQWTWTKFSNYVKSTTSRVLYGNGEIQAIDARLLLVISTFLGCILGNILSGR</sequence>
<dbReference type="EMBL" id="CH408157">
    <property type="protein sequence ID" value="EDK38889.2"/>
    <property type="molecule type" value="Genomic_DNA"/>
</dbReference>
<dbReference type="RefSeq" id="XP_001485258.1">
    <property type="nucleotide sequence ID" value="XM_001485208.1"/>
</dbReference>
<dbReference type="SMR" id="A5DI86"/>
<dbReference type="FunCoup" id="A5DI86">
    <property type="interactions" value="43"/>
</dbReference>
<dbReference type="STRING" id="294746.A5DI86"/>
<dbReference type="GeneID" id="5126995"/>
<dbReference type="KEGG" id="pgu:PGUG_02987"/>
<dbReference type="VEuPathDB" id="FungiDB:PGUG_02987"/>
<dbReference type="eggNOG" id="ENOG502QQ1E">
    <property type="taxonomic scope" value="Eukaryota"/>
</dbReference>
<dbReference type="HOGENOM" id="CLU_025632_5_0_1"/>
<dbReference type="InParanoid" id="A5DI86"/>
<dbReference type="OMA" id="RYHEEQM"/>
<dbReference type="OrthoDB" id="5595506at2759"/>
<dbReference type="Proteomes" id="UP000001997">
    <property type="component" value="Unassembled WGS sequence"/>
</dbReference>
<dbReference type="GO" id="GO:0005743">
    <property type="term" value="C:mitochondrial inner membrane"/>
    <property type="evidence" value="ECO:0007669"/>
    <property type="project" value="UniProtKB-SubCell"/>
</dbReference>
<dbReference type="GO" id="GO:0007007">
    <property type="term" value="P:inner mitochondrial membrane organization"/>
    <property type="evidence" value="ECO:0007669"/>
    <property type="project" value="TreeGrafter"/>
</dbReference>
<dbReference type="InterPro" id="IPR008839">
    <property type="entry name" value="MDM33_fungi"/>
</dbReference>
<dbReference type="PANTHER" id="PTHR31961">
    <property type="entry name" value="SENSITIVE TO HIGH EXPRESSION PROTEIN 9, MITOCHONDRIAL"/>
    <property type="match status" value="1"/>
</dbReference>
<dbReference type="PANTHER" id="PTHR31961:SF3">
    <property type="entry name" value="SENSITIVE TO HIGH EXPRESSION PROTEIN 9, MITOCHONDRIAL"/>
    <property type="match status" value="1"/>
</dbReference>
<dbReference type="Pfam" id="PF05546">
    <property type="entry name" value="She9_MDM33"/>
    <property type="match status" value="1"/>
</dbReference>
<feature type="transit peptide" description="Mitochondrion" evidence="2">
    <location>
        <begin position="1"/>
        <end position="35"/>
    </location>
</feature>
<feature type="chain" id="PRO_0000351062" description="Sensitive to high expression protein 9 homolog, mitochondrial">
    <location>
        <begin position="36"/>
        <end position="440"/>
    </location>
</feature>
<feature type="topological domain" description="Mitochondrial matrix" evidence="2">
    <location>
        <begin position="36"/>
        <end position="302"/>
    </location>
</feature>
<feature type="transmembrane region" description="Helical" evidence="2">
    <location>
        <begin position="303"/>
        <end position="323"/>
    </location>
</feature>
<feature type="topological domain" description="Mitochondrial intermembrane" evidence="2">
    <location>
        <begin position="324"/>
        <end position="416"/>
    </location>
</feature>
<feature type="transmembrane region" description="Helical" evidence="2">
    <location>
        <begin position="417"/>
        <end position="437"/>
    </location>
</feature>
<feature type="topological domain" description="Mitochondrial matrix" evidence="2">
    <location>
        <begin position="438"/>
        <end position="440"/>
    </location>
</feature>
<feature type="region of interest" description="Disordered" evidence="3">
    <location>
        <begin position="87"/>
        <end position="113"/>
    </location>
</feature>
<feature type="coiled-coil region" evidence="2">
    <location>
        <begin position="180"/>
        <end position="215"/>
    </location>
</feature>
<feature type="coiled-coil region" evidence="2">
    <location>
        <begin position="259"/>
        <end position="283"/>
    </location>
</feature>
<feature type="compositionally biased region" description="Polar residues" evidence="3">
    <location>
        <begin position="91"/>
        <end position="113"/>
    </location>
</feature>
<reference key="1">
    <citation type="journal article" date="2009" name="Nature">
        <title>Evolution of pathogenicity and sexual reproduction in eight Candida genomes.</title>
        <authorList>
            <person name="Butler G."/>
            <person name="Rasmussen M.D."/>
            <person name="Lin M.F."/>
            <person name="Santos M.A.S."/>
            <person name="Sakthikumar S."/>
            <person name="Munro C.A."/>
            <person name="Rheinbay E."/>
            <person name="Grabherr M."/>
            <person name="Forche A."/>
            <person name="Reedy J.L."/>
            <person name="Agrafioti I."/>
            <person name="Arnaud M.B."/>
            <person name="Bates S."/>
            <person name="Brown A.J.P."/>
            <person name="Brunke S."/>
            <person name="Costanzo M.C."/>
            <person name="Fitzpatrick D.A."/>
            <person name="de Groot P.W.J."/>
            <person name="Harris D."/>
            <person name="Hoyer L.L."/>
            <person name="Hube B."/>
            <person name="Klis F.M."/>
            <person name="Kodira C."/>
            <person name="Lennard N."/>
            <person name="Logue M.E."/>
            <person name="Martin R."/>
            <person name="Neiman A.M."/>
            <person name="Nikolaou E."/>
            <person name="Quail M.A."/>
            <person name="Quinn J."/>
            <person name="Santos M.C."/>
            <person name="Schmitzberger F.F."/>
            <person name="Sherlock G."/>
            <person name="Shah P."/>
            <person name="Silverstein K.A.T."/>
            <person name="Skrzypek M.S."/>
            <person name="Soll D."/>
            <person name="Staggs R."/>
            <person name="Stansfield I."/>
            <person name="Stumpf M.P.H."/>
            <person name="Sudbery P.E."/>
            <person name="Srikantha T."/>
            <person name="Zeng Q."/>
            <person name="Berman J."/>
            <person name="Berriman M."/>
            <person name="Heitman J."/>
            <person name="Gow N.A.R."/>
            <person name="Lorenz M.C."/>
            <person name="Birren B.W."/>
            <person name="Kellis M."/>
            <person name="Cuomo C.A."/>
        </authorList>
    </citation>
    <scope>NUCLEOTIDE SEQUENCE [LARGE SCALE GENOMIC DNA]</scope>
    <source>
        <strain>ATCC 6260 / CBS 566 / DSM 6381 / JCM 1539 / NBRC 10279 / NRRL Y-324</strain>
    </source>
</reference>
<gene>
    <name type="primary">SHE9</name>
    <name type="ORF">PGUG_02987</name>
</gene>
<evidence type="ECO:0000250" key="1"/>
<evidence type="ECO:0000255" key="2"/>
<evidence type="ECO:0000256" key="3">
    <source>
        <dbReference type="SAM" id="MobiDB-lite"/>
    </source>
</evidence>
<evidence type="ECO:0000305" key="4"/>
<accession>A5DI86</accession>
<organism>
    <name type="scientific">Meyerozyma guilliermondii (strain ATCC 6260 / CBS 566 / DSM 6381 / JCM 1539 / NBRC 10279 / NRRL Y-324)</name>
    <name type="common">Yeast</name>
    <name type="synonym">Candida guilliermondii</name>
    <dbReference type="NCBI Taxonomy" id="294746"/>
    <lineage>
        <taxon>Eukaryota</taxon>
        <taxon>Fungi</taxon>
        <taxon>Dikarya</taxon>
        <taxon>Ascomycota</taxon>
        <taxon>Saccharomycotina</taxon>
        <taxon>Pichiomycetes</taxon>
        <taxon>Debaryomycetaceae</taxon>
        <taxon>Meyerozyma</taxon>
    </lineage>
</organism>
<keyword id="KW-0175">Coiled coil</keyword>
<keyword id="KW-0472">Membrane</keyword>
<keyword id="KW-0496">Mitochondrion</keyword>
<keyword id="KW-0999">Mitochondrion inner membrane</keyword>
<keyword id="KW-1185">Reference proteome</keyword>
<keyword id="KW-0809">Transit peptide</keyword>
<keyword id="KW-0812">Transmembrane</keyword>
<keyword id="KW-1133">Transmembrane helix</keyword>